<gene>
    <name evidence="1" type="primary">ndk</name>
    <name type="ordered locus">YPDSF_2228</name>
</gene>
<dbReference type="EC" id="2.7.4.6" evidence="1"/>
<dbReference type="EMBL" id="CP000668">
    <property type="protein sequence ID" value="ABP40603.1"/>
    <property type="molecule type" value="Genomic_DNA"/>
</dbReference>
<dbReference type="RefSeq" id="WP_002209821.1">
    <property type="nucleotide sequence ID" value="NZ_CP009715.1"/>
</dbReference>
<dbReference type="SMR" id="A4TMU1"/>
<dbReference type="GeneID" id="57975841"/>
<dbReference type="KEGG" id="ypp:YPDSF_2228"/>
<dbReference type="PATRIC" id="fig|386656.14.peg.3716"/>
<dbReference type="GO" id="GO:0005737">
    <property type="term" value="C:cytoplasm"/>
    <property type="evidence" value="ECO:0007669"/>
    <property type="project" value="UniProtKB-SubCell"/>
</dbReference>
<dbReference type="GO" id="GO:0005524">
    <property type="term" value="F:ATP binding"/>
    <property type="evidence" value="ECO:0007669"/>
    <property type="project" value="UniProtKB-UniRule"/>
</dbReference>
<dbReference type="GO" id="GO:0046872">
    <property type="term" value="F:metal ion binding"/>
    <property type="evidence" value="ECO:0007669"/>
    <property type="project" value="UniProtKB-KW"/>
</dbReference>
<dbReference type="GO" id="GO:0004550">
    <property type="term" value="F:nucleoside diphosphate kinase activity"/>
    <property type="evidence" value="ECO:0007669"/>
    <property type="project" value="UniProtKB-UniRule"/>
</dbReference>
<dbReference type="GO" id="GO:0006241">
    <property type="term" value="P:CTP biosynthetic process"/>
    <property type="evidence" value="ECO:0007669"/>
    <property type="project" value="UniProtKB-UniRule"/>
</dbReference>
<dbReference type="GO" id="GO:0006183">
    <property type="term" value="P:GTP biosynthetic process"/>
    <property type="evidence" value="ECO:0007669"/>
    <property type="project" value="UniProtKB-UniRule"/>
</dbReference>
<dbReference type="GO" id="GO:0006228">
    <property type="term" value="P:UTP biosynthetic process"/>
    <property type="evidence" value="ECO:0007669"/>
    <property type="project" value="UniProtKB-UniRule"/>
</dbReference>
<dbReference type="CDD" id="cd04413">
    <property type="entry name" value="NDPk_I"/>
    <property type="match status" value="1"/>
</dbReference>
<dbReference type="FunFam" id="3.30.70.141:FF:000001">
    <property type="entry name" value="Nucleoside diphosphate kinase"/>
    <property type="match status" value="1"/>
</dbReference>
<dbReference type="Gene3D" id="3.30.70.141">
    <property type="entry name" value="Nucleoside diphosphate kinase-like domain"/>
    <property type="match status" value="1"/>
</dbReference>
<dbReference type="HAMAP" id="MF_00451">
    <property type="entry name" value="NDP_kinase"/>
    <property type="match status" value="1"/>
</dbReference>
<dbReference type="InterPro" id="IPR034907">
    <property type="entry name" value="NDK-like_dom"/>
</dbReference>
<dbReference type="InterPro" id="IPR036850">
    <property type="entry name" value="NDK-like_dom_sf"/>
</dbReference>
<dbReference type="InterPro" id="IPR001564">
    <property type="entry name" value="Nucleoside_diP_kinase"/>
</dbReference>
<dbReference type="InterPro" id="IPR023005">
    <property type="entry name" value="Nucleoside_diP_kinase_AS"/>
</dbReference>
<dbReference type="NCBIfam" id="NF001908">
    <property type="entry name" value="PRK00668.1"/>
    <property type="match status" value="1"/>
</dbReference>
<dbReference type="PANTHER" id="PTHR46161">
    <property type="entry name" value="NUCLEOSIDE DIPHOSPHATE KINASE"/>
    <property type="match status" value="1"/>
</dbReference>
<dbReference type="PANTHER" id="PTHR46161:SF3">
    <property type="entry name" value="NUCLEOSIDE DIPHOSPHATE KINASE DDB_G0292928-RELATED"/>
    <property type="match status" value="1"/>
</dbReference>
<dbReference type="Pfam" id="PF00334">
    <property type="entry name" value="NDK"/>
    <property type="match status" value="1"/>
</dbReference>
<dbReference type="PRINTS" id="PR01243">
    <property type="entry name" value="NUCDPKINASE"/>
</dbReference>
<dbReference type="SMART" id="SM00562">
    <property type="entry name" value="NDK"/>
    <property type="match status" value="1"/>
</dbReference>
<dbReference type="SUPFAM" id="SSF54919">
    <property type="entry name" value="Nucleoside diphosphate kinase, NDK"/>
    <property type="match status" value="1"/>
</dbReference>
<dbReference type="PROSITE" id="PS00469">
    <property type="entry name" value="NDPK"/>
    <property type="match status" value="1"/>
</dbReference>
<dbReference type="PROSITE" id="PS51374">
    <property type="entry name" value="NDPK_LIKE"/>
    <property type="match status" value="1"/>
</dbReference>
<feature type="chain" id="PRO_1000026312" description="Nucleoside diphosphate kinase">
    <location>
        <begin position="1"/>
        <end position="142"/>
    </location>
</feature>
<feature type="active site" description="Pros-phosphohistidine intermediate" evidence="1">
    <location>
        <position position="117"/>
    </location>
</feature>
<feature type="binding site" evidence="1">
    <location>
        <position position="11"/>
    </location>
    <ligand>
        <name>ATP</name>
        <dbReference type="ChEBI" id="CHEBI:30616"/>
    </ligand>
</feature>
<feature type="binding site" evidence="1">
    <location>
        <position position="59"/>
    </location>
    <ligand>
        <name>ATP</name>
        <dbReference type="ChEBI" id="CHEBI:30616"/>
    </ligand>
</feature>
<feature type="binding site" evidence="1">
    <location>
        <position position="87"/>
    </location>
    <ligand>
        <name>ATP</name>
        <dbReference type="ChEBI" id="CHEBI:30616"/>
    </ligand>
</feature>
<feature type="binding site" evidence="1">
    <location>
        <position position="93"/>
    </location>
    <ligand>
        <name>ATP</name>
        <dbReference type="ChEBI" id="CHEBI:30616"/>
    </ligand>
</feature>
<feature type="binding site" evidence="1">
    <location>
        <position position="104"/>
    </location>
    <ligand>
        <name>ATP</name>
        <dbReference type="ChEBI" id="CHEBI:30616"/>
    </ligand>
</feature>
<feature type="binding site" evidence="1">
    <location>
        <position position="114"/>
    </location>
    <ligand>
        <name>ATP</name>
        <dbReference type="ChEBI" id="CHEBI:30616"/>
    </ligand>
</feature>
<accession>A4TMU1</accession>
<organism>
    <name type="scientific">Yersinia pestis (strain Pestoides F)</name>
    <dbReference type="NCBI Taxonomy" id="386656"/>
    <lineage>
        <taxon>Bacteria</taxon>
        <taxon>Pseudomonadati</taxon>
        <taxon>Pseudomonadota</taxon>
        <taxon>Gammaproteobacteria</taxon>
        <taxon>Enterobacterales</taxon>
        <taxon>Yersiniaceae</taxon>
        <taxon>Yersinia</taxon>
    </lineage>
</organism>
<proteinExistence type="inferred from homology"/>
<name>NDK_YERPP</name>
<evidence type="ECO:0000255" key="1">
    <source>
        <dbReference type="HAMAP-Rule" id="MF_00451"/>
    </source>
</evidence>
<reference key="1">
    <citation type="submission" date="2007-02" db="EMBL/GenBank/DDBJ databases">
        <title>Complete sequence of chromosome of Yersinia pestis Pestoides F.</title>
        <authorList>
            <consortium name="US DOE Joint Genome Institute"/>
            <person name="Copeland A."/>
            <person name="Lucas S."/>
            <person name="Lapidus A."/>
            <person name="Barry K."/>
            <person name="Detter J.C."/>
            <person name="Glavina del Rio T."/>
            <person name="Hammon N."/>
            <person name="Israni S."/>
            <person name="Dalin E."/>
            <person name="Tice H."/>
            <person name="Pitluck S."/>
            <person name="Di Bartolo G."/>
            <person name="Chain P."/>
            <person name="Malfatti S."/>
            <person name="Shin M."/>
            <person name="Vergez L."/>
            <person name="Schmutz J."/>
            <person name="Larimer F."/>
            <person name="Land M."/>
            <person name="Hauser L."/>
            <person name="Worsham P."/>
            <person name="Chu M."/>
            <person name="Bearden S."/>
            <person name="Garcia E."/>
            <person name="Richardson P."/>
        </authorList>
    </citation>
    <scope>NUCLEOTIDE SEQUENCE [LARGE SCALE GENOMIC DNA]</scope>
    <source>
        <strain>Pestoides F</strain>
    </source>
</reference>
<sequence length="142" mass="15631">MALERTFSIIKPNAVANNDIGAIYARFERAGFKIIAAKMLHLTKEQAEGFYAEHKGRPFFDGLVEFMTSGPIMVQVLEGENAVQRHRDIMGATNPDNALAGTLRADFSDSFTANAVHGSDAVESAQREIAYFFAADEIFPRS</sequence>
<protein>
    <recommendedName>
        <fullName evidence="1">Nucleoside diphosphate kinase</fullName>
        <shortName evidence="1">NDK</shortName>
        <shortName evidence="1">NDP kinase</shortName>
        <ecNumber evidence="1">2.7.4.6</ecNumber>
    </recommendedName>
    <alternativeName>
        <fullName evidence="1">Nucleoside-2-P kinase</fullName>
    </alternativeName>
</protein>
<comment type="function">
    <text evidence="1">Major role in the synthesis of nucleoside triphosphates other than ATP. The ATP gamma phosphate is transferred to the NDP beta phosphate via a ping-pong mechanism, using a phosphorylated active-site intermediate.</text>
</comment>
<comment type="catalytic activity">
    <reaction evidence="1">
        <text>a 2'-deoxyribonucleoside 5'-diphosphate + ATP = a 2'-deoxyribonucleoside 5'-triphosphate + ADP</text>
        <dbReference type="Rhea" id="RHEA:44640"/>
        <dbReference type="ChEBI" id="CHEBI:30616"/>
        <dbReference type="ChEBI" id="CHEBI:61560"/>
        <dbReference type="ChEBI" id="CHEBI:73316"/>
        <dbReference type="ChEBI" id="CHEBI:456216"/>
        <dbReference type="EC" id="2.7.4.6"/>
    </reaction>
</comment>
<comment type="catalytic activity">
    <reaction evidence="1">
        <text>a ribonucleoside 5'-diphosphate + ATP = a ribonucleoside 5'-triphosphate + ADP</text>
        <dbReference type="Rhea" id="RHEA:18113"/>
        <dbReference type="ChEBI" id="CHEBI:30616"/>
        <dbReference type="ChEBI" id="CHEBI:57930"/>
        <dbReference type="ChEBI" id="CHEBI:61557"/>
        <dbReference type="ChEBI" id="CHEBI:456216"/>
        <dbReference type="EC" id="2.7.4.6"/>
    </reaction>
</comment>
<comment type="cofactor">
    <cofactor evidence="1">
        <name>Mg(2+)</name>
        <dbReference type="ChEBI" id="CHEBI:18420"/>
    </cofactor>
</comment>
<comment type="subunit">
    <text evidence="1">Homotetramer.</text>
</comment>
<comment type="subcellular location">
    <subcellularLocation>
        <location evidence="1">Cytoplasm</location>
    </subcellularLocation>
</comment>
<comment type="similarity">
    <text evidence="1">Belongs to the NDK family.</text>
</comment>
<keyword id="KW-0067">ATP-binding</keyword>
<keyword id="KW-0963">Cytoplasm</keyword>
<keyword id="KW-0418">Kinase</keyword>
<keyword id="KW-0460">Magnesium</keyword>
<keyword id="KW-0479">Metal-binding</keyword>
<keyword id="KW-0546">Nucleotide metabolism</keyword>
<keyword id="KW-0547">Nucleotide-binding</keyword>
<keyword id="KW-0597">Phosphoprotein</keyword>
<keyword id="KW-0808">Transferase</keyword>